<gene>
    <name evidence="9 11" type="primary">Cers3</name>
    <name evidence="8" type="synonym">Lass3</name>
</gene>
<evidence type="ECO:0000250" key="1">
    <source>
        <dbReference type="UniProtKB" id="Q8IU89"/>
    </source>
</evidence>
<evidence type="ECO:0000255" key="2"/>
<evidence type="ECO:0000255" key="3">
    <source>
        <dbReference type="PROSITE-ProRule" id="PRU00205"/>
    </source>
</evidence>
<evidence type="ECO:0000256" key="4">
    <source>
        <dbReference type="SAM" id="MobiDB-lite"/>
    </source>
</evidence>
<evidence type="ECO:0000269" key="5">
    <source>
    </source>
</evidence>
<evidence type="ECO:0000269" key="6">
    <source>
    </source>
</evidence>
<evidence type="ECO:0000269" key="7">
    <source>
    </source>
</evidence>
<evidence type="ECO:0000303" key="8">
    <source>
    </source>
</evidence>
<evidence type="ECO:0000303" key="9">
    <source>
    </source>
</evidence>
<evidence type="ECO:0000305" key="10"/>
<evidence type="ECO:0000312" key="11">
    <source>
        <dbReference type="MGI" id="MGI:2681008"/>
    </source>
</evidence>
<evidence type="ECO:0007744" key="12">
    <source>
    </source>
</evidence>
<accession>Q1A3B0</accession>
<accession>E9PVY9</accession>
<accession>Q195J4</accession>
<organism>
    <name type="scientific">Mus musculus</name>
    <name type="common">Mouse</name>
    <dbReference type="NCBI Taxonomy" id="10090"/>
    <lineage>
        <taxon>Eukaryota</taxon>
        <taxon>Metazoa</taxon>
        <taxon>Chordata</taxon>
        <taxon>Craniata</taxon>
        <taxon>Vertebrata</taxon>
        <taxon>Euteleostomi</taxon>
        <taxon>Mammalia</taxon>
        <taxon>Eutheria</taxon>
        <taxon>Euarchontoglires</taxon>
        <taxon>Glires</taxon>
        <taxon>Rodentia</taxon>
        <taxon>Myomorpha</taxon>
        <taxon>Muroidea</taxon>
        <taxon>Muridae</taxon>
        <taxon>Murinae</taxon>
        <taxon>Mus</taxon>
        <taxon>Mus</taxon>
    </lineage>
</organism>
<protein>
    <recommendedName>
        <fullName evidence="9">Ceramide synthase 3</fullName>
        <shortName evidence="9">CerS3</shortName>
        <shortName evidence="9">mCerS3</shortName>
    </recommendedName>
    <alternativeName>
        <fullName evidence="10">Dihydroceramide synthase 3</fullName>
    </alternativeName>
    <alternativeName>
        <fullName evidence="8">LAG1 longevity assurance homolog 3</fullName>
    </alternativeName>
    <alternativeName>
        <fullName evidence="10">Sphingosine N-acyltransferase CERS3</fullName>
        <ecNumber evidence="5">2.3.1.24</ecNumber>
    </alternativeName>
    <alternativeName>
        <fullName evidence="10">Ultra-long-chain ceramide synthase CERS3</fullName>
        <ecNumber evidence="7">2.3.1.298</ecNumber>
    </alternativeName>
    <alternativeName>
        <fullName evidence="10">Very-long-chain ceramide synthase CERS3</fullName>
        <ecNumber evidence="5 6 7">2.3.1.297</ecNumber>
    </alternativeName>
</protein>
<comment type="function">
    <text evidence="5 6 7">Ceramide synthase that catalyzes the transfer of the acyl chain from acyl-CoA to a sphingoid base, with high selectivity toward very- and ultra-long-chain fatty acyl-CoA (chain length greater than C22) (PubMed:16753040, PubMed:18541923, PubMed:22038835). N-acylates sphinganine and sphingosine bases to form dihydroceramides and ceramides in de novo synthesis and salvage pathways, respectively (PubMed:16753040, PubMed:18541923, PubMed:22038835). It is crucial for the synthesis of ultra-long-chain ceramides in the epidermis, to maintain epidermal lipid homeostasis and terminal differentiation (PubMed:22038835).</text>
</comment>
<comment type="catalytic activity">
    <reaction evidence="5 6 7">
        <text>a very long-chain fatty acyl-CoA + a sphingoid base = an N-(very-long-chain fatty acyl)-sphingoid base + CoA + H(+)</text>
        <dbReference type="Rhea" id="RHEA:61480"/>
        <dbReference type="ChEBI" id="CHEBI:15378"/>
        <dbReference type="ChEBI" id="CHEBI:57287"/>
        <dbReference type="ChEBI" id="CHEBI:84410"/>
        <dbReference type="ChEBI" id="CHEBI:138261"/>
        <dbReference type="ChEBI" id="CHEBI:144712"/>
        <dbReference type="EC" id="2.3.1.297"/>
    </reaction>
    <physiologicalReaction direction="left-to-right" evidence="5 6 7">
        <dbReference type="Rhea" id="RHEA:61481"/>
    </physiologicalReaction>
</comment>
<comment type="catalytic activity">
    <reaction evidence="5">
        <text>docosanoyl-CoA + sphinganine = N-docosanoylsphinganine + CoA + H(+)</text>
        <dbReference type="Rhea" id="RHEA:36535"/>
        <dbReference type="ChEBI" id="CHEBI:15378"/>
        <dbReference type="ChEBI" id="CHEBI:57287"/>
        <dbReference type="ChEBI" id="CHEBI:57817"/>
        <dbReference type="ChEBI" id="CHEBI:65059"/>
        <dbReference type="ChEBI" id="CHEBI:67021"/>
    </reaction>
    <physiologicalReaction direction="left-to-right" evidence="5">
        <dbReference type="Rhea" id="RHEA:36536"/>
    </physiologicalReaction>
</comment>
<comment type="catalytic activity">
    <reaction evidence="5 7">
        <text>tetracosanoyl-CoA + sphinganine = N-tetracosanoylsphinganine + CoA + H(+)</text>
        <dbReference type="Rhea" id="RHEA:33591"/>
        <dbReference type="ChEBI" id="CHEBI:15378"/>
        <dbReference type="ChEBI" id="CHEBI:52961"/>
        <dbReference type="ChEBI" id="CHEBI:57287"/>
        <dbReference type="ChEBI" id="CHEBI:57817"/>
        <dbReference type="ChEBI" id="CHEBI:65052"/>
    </reaction>
    <physiologicalReaction direction="left-to-right" evidence="5 7">
        <dbReference type="Rhea" id="RHEA:33592"/>
    </physiologicalReaction>
</comment>
<comment type="catalytic activity">
    <reaction evidence="7">
        <text>hexacosanoyl-CoA + sphinganine = N-hexacosanoylsphinganine + CoA + H(+)</text>
        <dbReference type="Rhea" id="RHEA:33351"/>
        <dbReference type="ChEBI" id="CHEBI:15378"/>
        <dbReference type="ChEBI" id="CHEBI:52962"/>
        <dbReference type="ChEBI" id="CHEBI:57287"/>
        <dbReference type="ChEBI" id="CHEBI:57817"/>
        <dbReference type="ChEBI" id="CHEBI:64868"/>
    </reaction>
    <physiologicalReaction direction="left-to-right" evidence="7">
        <dbReference type="Rhea" id="RHEA:33352"/>
    </physiologicalReaction>
</comment>
<comment type="catalytic activity">
    <reaction evidence="6">
        <text>2-hydroxydocosanoyl-CoA + sphinganine = N-(2-hydroxydocosanoyl)-sphinganine + CoA + H(+)</text>
        <dbReference type="Rhea" id="RHEA:36619"/>
        <dbReference type="ChEBI" id="CHEBI:15378"/>
        <dbReference type="ChEBI" id="CHEBI:57287"/>
        <dbReference type="ChEBI" id="CHEBI:57817"/>
        <dbReference type="ChEBI" id="CHEBI:67023"/>
        <dbReference type="ChEBI" id="CHEBI:74117"/>
    </reaction>
    <physiologicalReaction direction="left-to-right" evidence="6">
        <dbReference type="Rhea" id="RHEA:36620"/>
    </physiologicalReaction>
</comment>
<comment type="catalytic activity">
    <reaction evidence="6">
        <text>2-hydroxytetracosanoyl-CoA + sphinganine = N-(2-hydroxytetracosanoyl)-sphinganine + CoA + H(+)</text>
        <dbReference type="Rhea" id="RHEA:36627"/>
        <dbReference type="ChEBI" id="CHEBI:15378"/>
        <dbReference type="ChEBI" id="CHEBI:52371"/>
        <dbReference type="ChEBI" id="CHEBI:57287"/>
        <dbReference type="ChEBI" id="CHEBI:57817"/>
        <dbReference type="ChEBI" id="CHEBI:74118"/>
    </reaction>
    <physiologicalReaction direction="left-to-right" evidence="6">
        <dbReference type="Rhea" id="RHEA:36628"/>
    </physiologicalReaction>
</comment>
<comment type="catalytic activity">
    <reaction evidence="7">
        <text>an ultra-long-chain fatty acyl-CoA + a sphingoid base = an N-(ultra-long-chain-acyl)-sphingoid base + CoA + H(+)</text>
        <dbReference type="Rhea" id="RHEA:61492"/>
        <dbReference type="ChEBI" id="CHEBI:15378"/>
        <dbReference type="ChEBI" id="CHEBI:57287"/>
        <dbReference type="ChEBI" id="CHEBI:84410"/>
        <dbReference type="ChEBI" id="CHEBI:143018"/>
        <dbReference type="ChEBI" id="CHEBI:144713"/>
        <dbReference type="EC" id="2.3.1.298"/>
    </reaction>
    <physiologicalReaction direction="left-to-right" evidence="7">
        <dbReference type="Rhea" id="RHEA:61493"/>
    </physiologicalReaction>
</comment>
<comment type="catalytic activity">
    <reaction evidence="7">
        <text>octacosanoyl-CoA + sphinganine = N-(octacosanoyl)-sphinganine + CoA + H(+)</text>
        <dbReference type="Rhea" id="RHEA:36675"/>
        <dbReference type="ChEBI" id="CHEBI:15378"/>
        <dbReference type="ChEBI" id="CHEBI:57287"/>
        <dbReference type="ChEBI" id="CHEBI:57817"/>
        <dbReference type="ChEBI" id="CHEBI:72019"/>
        <dbReference type="ChEBI" id="CHEBI:74141"/>
    </reaction>
    <physiologicalReaction direction="left-to-right" evidence="7">
        <dbReference type="Rhea" id="RHEA:36676"/>
    </physiologicalReaction>
</comment>
<comment type="catalytic activity">
    <reaction evidence="5">
        <text>a fatty acyl-CoA + sphing-4-enine = an N-acylsphing-4-enine + CoA + H(+)</text>
        <dbReference type="Rhea" id="RHEA:23768"/>
        <dbReference type="ChEBI" id="CHEBI:15378"/>
        <dbReference type="ChEBI" id="CHEBI:52639"/>
        <dbReference type="ChEBI" id="CHEBI:57287"/>
        <dbReference type="ChEBI" id="CHEBI:57756"/>
        <dbReference type="ChEBI" id="CHEBI:77636"/>
        <dbReference type="EC" id="2.3.1.24"/>
    </reaction>
    <physiologicalReaction direction="left-to-right" evidence="5">
        <dbReference type="Rhea" id="RHEA:23769"/>
    </physiologicalReaction>
</comment>
<comment type="catalytic activity">
    <reaction evidence="5">
        <text>sphinganine + octadecanoyl-CoA = N-(octadecanoyl)-sphinganine + CoA + H(+)</text>
        <dbReference type="Rhea" id="RHEA:36547"/>
        <dbReference type="ChEBI" id="CHEBI:15378"/>
        <dbReference type="ChEBI" id="CHEBI:57287"/>
        <dbReference type="ChEBI" id="CHEBI:57394"/>
        <dbReference type="ChEBI" id="CHEBI:57817"/>
        <dbReference type="ChEBI" id="CHEBI:67033"/>
    </reaction>
    <physiologicalReaction direction="left-to-right" evidence="5">
        <dbReference type="Rhea" id="RHEA:36548"/>
    </physiologicalReaction>
</comment>
<comment type="catalytic activity">
    <reaction evidence="6">
        <text>2-hydroxyoctadecanoyl-CoA + sphinganine = N-(2-hydroxyoctadecanoyl)-sphinganine + CoA + H(+)</text>
        <dbReference type="Rhea" id="RHEA:36615"/>
        <dbReference type="ChEBI" id="CHEBI:15378"/>
        <dbReference type="ChEBI" id="CHEBI:57287"/>
        <dbReference type="ChEBI" id="CHEBI:57817"/>
        <dbReference type="ChEBI" id="CHEBI:67034"/>
        <dbReference type="ChEBI" id="CHEBI:74116"/>
    </reaction>
    <physiologicalReaction direction="left-to-right" evidence="6">
        <dbReference type="Rhea" id="RHEA:36616"/>
    </physiologicalReaction>
</comment>
<comment type="pathway">
    <text evidence="5 6 7">Lipid metabolism; sphingolipid metabolism.</text>
</comment>
<comment type="subcellular location">
    <subcellularLocation>
        <location evidence="7">Endoplasmic reticulum membrane</location>
        <topology evidence="2">Multi-pass membrane protein</topology>
    </subcellularLocation>
</comment>
<comment type="alternative products">
    <event type="alternative promoter"/>
    <isoform>
        <id>Q1A3B0-1</id>
        <name>1</name>
        <sequence type="displayed"/>
    </isoform>
    <isoform>
        <id>Q1A3B0-2</id>
        <name>2</name>
        <name evidence="8">LASS3-long</name>
        <sequence type="described" ref="VSP_047870"/>
    </isoform>
</comment>
<comment type="tissue specificity">
    <text evidence="5 7">Predominantly expressed in testis (PubMed:16753040). In skin, present in the upper stratum spinosum and stratum granulosum (at protein level) (PubMed:22038835).</text>
</comment>
<comment type="disruption phenotype">
    <text evidence="7">Newborn mice die shortly after birth from transepidermal water loss (PubMed:22038835). Defects are due to a complete loss of ultra long chain (more than C26:0) ceramides (PubMed:22038835). Newborn skin appears unwrinkled, erythematous and sticky (PubMed:22038835). Skin is also prone to C.albicans infection (PubMed:22038835).</text>
</comment>
<comment type="caution">
    <text evidence="7 10">Contains a predicted homeobox domain which is degenerated, lacking residues important for DNA-binding. Moreover, the protein localizes in the endoplasmic reticulum and not in the nucleus, which also argues against homeobox function (PubMed:22038835).</text>
</comment>
<proteinExistence type="evidence at protein level"/>
<feature type="chain" id="PRO_0000423433" description="Ceramide synthase 3">
    <location>
        <begin position="1"/>
        <end position="383"/>
    </location>
</feature>
<feature type="transmembrane region" description="Helical" evidence="2">
    <location>
        <begin position="32"/>
        <end position="52"/>
    </location>
</feature>
<feature type="transmembrane region" description="Helical" evidence="2">
    <location>
        <begin position="139"/>
        <end position="159"/>
    </location>
</feature>
<feature type="transmembrane region" description="Helical" evidence="2">
    <location>
        <begin position="174"/>
        <end position="194"/>
    </location>
</feature>
<feature type="transmembrane region" description="Helical" evidence="2">
    <location>
        <begin position="205"/>
        <end position="225"/>
    </location>
</feature>
<feature type="transmembrane region" description="Helical" evidence="2">
    <location>
        <begin position="263"/>
        <end position="283"/>
    </location>
</feature>
<feature type="transmembrane region" description="Helical" evidence="2">
    <location>
        <begin position="302"/>
        <end position="322"/>
    </location>
</feature>
<feature type="topological domain" description="Cytoplasmic" evidence="1">
    <location>
        <begin position="323"/>
        <end position="383"/>
    </location>
</feature>
<feature type="domain" description="TLC" evidence="3">
    <location>
        <begin position="130"/>
        <end position="331"/>
    </location>
</feature>
<feature type="region of interest" description="Homeobox-like" evidence="10">
    <location>
        <begin position="66"/>
        <end position="127"/>
    </location>
</feature>
<feature type="region of interest" description="Disordered" evidence="4">
    <location>
        <begin position="340"/>
        <end position="383"/>
    </location>
</feature>
<feature type="compositionally biased region" description="Acidic residues" evidence="4">
    <location>
        <begin position="342"/>
        <end position="354"/>
    </location>
</feature>
<feature type="compositionally biased region" description="Basic and acidic residues" evidence="4">
    <location>
        <begin position="355"/>
        <end position="364"/>
    </location>
</feature>
<feature type="modified residue" description="Phosphoserine" evidence="12">
    <location>
        <position position="340"/>
    </location>
</feature>
<feature type="splice variant" id="VSP_047870" description="In isoform 2." evidence="8">
    <original>M</original>
    <variation>MRCVALENKAAWNGKPLQLLPTGEEYPVQTGALGRRM</variation>
    <location>
        <position position="1"/>
    </location>
</feature>
<feature type="sequence conflict" description="In Ref. 1; ABG00152." evidence="10" ref="1">
    <original>L</original>
    <variation>H</variation>
    <location sequence="Q1A3B0-2">
        <position position="6"/>
    </location>
</feature>
<sequence length="383" mass="46081">MFQTFRKWFWSERYWLPPTIKWSDLEDHDGLVFVKASHLYITIPYAFLLMVVRYFFEKFVATPLANALGIKKTQHKIKPNAILENFFKHSTSKPSHTDIYGLAKKCNLTERQVERWLRIRQKQNKPCRLQKFQESCWRFTFYLLITMAGAVFLYDKPWAYDLWEVWNDYPRQPLLPSQYWYYILEMSFYWSLVFSLSTDIKRKDFLAHVIHHLAAISLMSFSWCANYIRSGTLVMFIHDISDIWLESAKMFSYAGWKQTCNTLFFIFTVVFFISRFIIFPFWILYCTLILPLHYLEPFFSYIFLNLQLMILQGLHVYWGYFILKMLNRCIFTQNVQDVRSDNEEEEEEEEEEEAESTKGKETEYLKNGLGTNRHLIANGQHGR</sequence>
<name>CERS3_MOUSE</name>
<dbReference type="EC" id="2.3.1.24" evidence="5"/>
<dbReference type="EC" id="2.3.1.298" evidence="7"/>
<dbReference type="EC" id="2.3.1.297" evidence="5 6 7"/>
<dbReference type="EMBL" id="DQ358087">
    <property type="protein sequence ID" value="ABC87758.1"/>
    <property type="molecule type" value="mRNA"/>
</dbReference>
<dbReference type="EMBL" id="DQ646881">
    <property type="protein sequence ID" value="ABG00152.1"/>
    <property type="molecule type" value="mRNA"/>
</dbReference>
<dbReference type="EMBL" id="AC120791">
    <property type="status" value="NOT_ANNOTATED_CDS"/>
    <property type="molecule type" value="Genomic_DNA"/>
</dbReference>
<dbReference type="CCDS" id="CCDS52268.1">
    <molecule id="Q1A3B0-2"/>
</dbReference>
<dbReference type="RefSeq" id="NP_001157673.1">
    <molecule id="Q1A3B0-2"/>
    <property type="nucleotide sequence ID" value="NM_001164201.1"/>
</dbReference>
<dbReference type="RefSeq" id="XP_011249179.1">
    <property type="nucleotide sequence ID" value="XM_011250877.2"/>
</dbReference>
<dbReference type="SMR" id="Q1A3B0"/>
<dbReference type="FunCoup" id="Q1A3B0">
    <property type="interactions" value="464"/>
</dbReference>
<dbReference type="STRING" id="10090.ENSMUSP00000069238"/>
<dbReference type="SwissLipids" id="SLP:000000260"/>
<dbReference type="iPTMnet" id="Q1A3B0"/>
<dbReference type="PhosphoSitePlus" id="Q1A3B0"/>
<dbReference type="SwissPalm" id="Q1A3B0"/>
<dbReference type="PaxDb" id="10090-ENSMUSP00000069238"/>
<dbReference type="ProteomicsDB" id="280075">
    <molecule id="Q1A3B0-1"/>
</dbReference>
<dbReference type="ProteomicsDB" id="280076">
    <molecule id="Q1A3B0-2"/>
</dbReference>
<dbReference type="Antibodypedia" id="1805">
    <property type="antibodies" value="148 antibodies from 29 providers"/>
</dbReference>
<dbReference type="Ensembl" id="ENSMUST00000066475.11">
    <molecule id="Q1A3B0-2"/>
    <property type="protein sequence ID" value="ENSMUSP00000069238.9"/>
    <property type="gene ID" value="ENSMUSG00000030510.12"/>
</dbReference>
<dbReference type="Ensembl" id="ENSMUST00000208521.2">
    <molecule id="Q1A3B0-1"/>
    <property type="protein sequence ID" value="ENSMUSP00000146745.2"/>
    <property type="gene ID" value="ENSMUSG00000030510.12"/>
</dbReference>
<dbReference type="GeneID" id="545975"/>
<dbReference type="KEGG" id="mmu:545975"/>
<dbReference type="UCSC" id="uc009hhv.2">
    <molecule id="Q1A3B0-2"/>
    <property type="organism name" value="mouse"/>
</dbReference>
<dbReference type="AGR" id="MGI:2681008"/>
<dbReference type="CTD" id="204219"/>
<dbReference type="MGI" id="MGI:2681008">
    <property type="gene designation" value="Cers3"/>
</dbReference>
<dbReference type="VEuPathDB" id="HostDB:ENSMUSG00000030510"/>
<dbReference type="eggNOG" id="KOG1607">
    <property type="taxonomic scope" value="Eukaryota"/>
</dbReference>
<dbReference type="GeneTree" id="ENSGT01030000234515"/>
<dbReference type="HOGENOM" id="CLU_028277_1_1_1"/>
<dbReference type="InParanoid" id="Q1A3B0"/>
<dbReference type="OMA" id="DHDGLIF"/>
<dbReference type="OrthoDB" id="68459at9989"/>
<dbReference type="PhylomeDB" id="Q1A3B0"/>
<dbReference type="TreeFam" id="TF314319"/>
<dbReference type="BRENDA" id="2.3.1.297">
    <property type="organism ID" value="3474"/>
</dbReference>
<dbReference type="BRENDA" id="2.3.1.298">
    <property type="organism ID" value="3474"/>
</dbReference>
<dbReference type="Reactome" id="R-MMU-1660661">
    <property type="pathway name" value="Sphingolipid de novo biosynthesis"/>
</dbReference>
<dbReference type="UniPathway" id="UPA00222"/>
<dbReference type="BioGRID-ORCS" id="545975">
    <property type="hits" value="1 hit in 81 CRISPR screens"/>
</dbReference>
<dbReference type="ChiTaRS" id="Cers3">
    <property type="organism name" value="mouse"/>
</dbReference>
<dbReference type="PRO" id="PR:Q1A3B0"/>
<dbReference type="Proteomes" id="UP000000589">
    <property type="component" value="Chromosome 7"/>
</dbReference>
<dbReference type="RNAct" id="Q1A3B0">
    <property type="molecule type" value="protein"/>
</dbReference>
<dbReference type="Bgee" id="ENSMUSG00000030510">
    <property type="expression patterns" value="Expressed in spermatocyte and 67 other cell types or tissues"/>
</dbReference>
<dbReference type="GO" id="GO:0005783">
    <property type="term" value="C:endoplasmic reticulum"/>
    <property type="evidence" value="ECO:0000314"/>
    <property type="project" value="UniProtKB"/>
</dbReference>
<dbReference type="GO" id="GO:0005789">
    <property type="term" value="C:endoplasmic reticulum membrane"/>
    <property type="evidence" value="ECO:0007669"/>
    <property type="project" value="UniProtKB-SubCell"/>
</dbReference>
<dbReference type="GO" id="GO:0003677">
    <property type="term" value="F:DNA binding"/>
    <property type="evidence" value="ECO:0007669"/>
    <property type="project" value="InterPro"/>
</dbReference>
<dbReference type="GO" id="GO:0050291">
    <property type="term" value="F:sphingosine N-acyltransferase activity"/>
    <property type="evidence" value="ECO:0000314"/>
    <property type="project" value="UniProtKB"/>
</dbReference>
<dbReference type="GO" id="GO:0046513">
    <property type="term" value="P:ceramide biosynthetic process"/>
    <property type="evidence" value="ECO:0000314"/>
    <property type="project" value="UniProtKB"/>
</dbReference>
<dbReference type="GO" id="GO:0070268">
    <property type="term" value="P:cornification"/>
    <property type="evidence" value="ECO:0000315"/>
    <property type="project" value="UniProtKB"/>
</dbReference>
<dbReference type="GO" id="GO:0008544">
    <property type="term" value="P:epidermis development"/>
    <property type="evidence" value="ECO:0000315"/>
    <property type="project" value="UniProtKB"/>
</dbReference>
<dbReference type="GO" id="GO:0030148">
    <property type="term" value="P:sphingolipid biosynthetic process"/>
    <property type="evidence" value="ECO:0000314"/>
    <property type="project" value="MGI"/>
</dbReference>
<dbReference type="CDD" id="cd00086">
    <property type="entry name" value="homeodomain"/>
    <property type="match status" value="1"/>
</dbReference>
<dbReference type="FunFam" id="1.10.10.60:FF:000020">
    <property type="entry name" value="Ceramide synthase 5"/>
    <property type="match status" value="1"/>
</dbReference>
<dbReference type="Gene3D" id="1.10.10.60">
    <property type="entry name" value="Homeodomain-like"/>
    <property type="match status" value="1"/>
</dbReference>
<dbReference type="InterPro" id="IPR001356">
    <property type="entry name" value="HD"/>
</dbReference>
<dbReference type="InterPro" id="IPR009057">
    <property type="entry name" value="Homeodomain-like_sf"/>
</dbReference>
<dbReference type="InterPro" id="IPR016439">
    <property type="entry name" value="Lag1/Lac1-like"/>
</dbReference>
<dbReference type="InterPro" id="IPR006634">
    <property type="entry name" value="TLC-dom"/>
</dbReference>
<dbReference type="PANTHER" id="PTHR12560:SF18">
    <property type="entry name" value="CERAMIDE SYNTHASE 3"/>
    <property type="match status" value="1"/>
</dbReference>
<dbReference type="PANTHER" id="PTHR12560">
    <property type="entry name" value="LONGEVITY ASSURANCE FACTOR 1 LAG1"/>
    <property type="match status" value="1"/>
</dbReference>
<dbReference type="Pfam" id="PF00046">
    <property type="entry name" value="Homeodomain"/>
    <property type="match status" value="1"/>
</dbReference>
<dbReference type="Pfam" id="PF03798">
    <property type="entry name" value="TRAM_LAG1_CLN8"/>
    <property type="match status" value="1"/>
</dbReference>
<dbReference type="PIRSF" id="PIRSF005225">
    <property type="entry name" value="LAG1_LAC1"/>
    <property type="match status" value="1"/>
</dbReference>
<dbReference type="SMART" id="SM00724">
    <property type="entry name" value="TLC"/>
    <property type="match status" value="1"/>
</dbReference>
<dbReference type="SUPFAM" id="SSF46689">
    <property type="entry name" value="Homeodomain-like"/>
    <property type="match status" value="1"/>
</dbReference>
<dbReference type="PROSITE" id="PS50922">
    <property type="entry name" value="TLC"/>
    <property type="match status" value="1"/>
</dbReference>
<keyword id="KW-0877">Alternative promoter usage</keyword>
<keyword id="KW-0256">Endoplasmic reticulum</keyword>
<keyword id="KW-0444">Lipid biosynthesis</keyword>
<keyword id="KW-0443">Lipid metabolism</keyword>
<keyword id="KW-0472">Membrane</keyword>
<keyword id="KW-0597">Phosphoprotein</keyword>
<keyword id="KW-1185">Reference proteome</keyword>
<keyword id="KW-0808">Transferase</keyword>
<keyword id="KW-0812">Transmembrane</keyword>
<keyword id="KW-1133">Transmembrane helix</keyword>
<reference key="1">
    <citation type="journal article" date="2006" name="Biochem. J.">
        <title>LASS3 (longevity assurance homologue 3) is a mainly testis-specific (dihydro)ceramide synthase with relatively broad substrate specificity.</title>
        <authorList>
            <person name="Mizutani Y."/>
            <person name="Kihara A."/>
            <person name="Igarashi Y."/>
        </authorList>
    </citation>
    <scope>NUCLEOTIDE SEQUENCE [MRNA] (ISOFORMS 1 AND 2)</scope>
    <scope>FUNCTION</scope>
    <scope>CATALYTIC ACTIVITY</scope>
    <scope>TISSUE SPECIFICITY</scope>
    <scope>PATHWAY</scope>
    <source>
        <tissue>Skin</tissue>
    </source>
</reference>
<reference key="2">
    <citation type="journal article" date="2009" name="PLoS Biol.">
        <title>Lineage-specific biology revealed by a finished genome assembly of the mouse.</title>
        <authorList>
            <person name="Church D.M."/>
            <person name="Goodstadt L."/>
            <person name="Hillier L.W."/>
            <person name="Zody M.C."/>
            <person name="Goldstein S."/>
            <person name="She X."/>
            <person name="Bult C.J."/>
            <person name="Agarwala R."/>
            <person name="Cherry J.L."/>
            <person name="DiCuccio M."/>
            <person name="Hlavina W."/>
            <person name="Kapustin Y."/>
            <person name="Meric P."/>
            <person name="Maglott D."/>
            <person name="Birtle Z."/>
            <person name="Marques A.C."/>
            <person name="Graves T."/>
            <person name="Zhou S."/>
            <person name="Teague B."/>
            <person name="Potamousis K."/>
            <person name="Churas C."/>
            <person name="Place M."/>
            <person name="Herschleb J."/>
            <person name="Runnheim R."/>
            <person name="Forrest D."/>
            <person name="Amos-Landgraf J."/>
            <person name="Schwartz D.C."/>
            <person name="Cheng Z."/>
            <person name="Lindblad-Toh K."/>
            <person name="Eichler E.E."/>
            <person name="Ponting C.P."/>
        </authorList>
    </citation>
    <scope>NUCLEOTIDE SEQUENCE [LARGE SCALE GENOMIC DNA]</scope>
    <source>
        <strain>C57BL/6J</strain>
    </source>
</reference>
<reference key="3">
    <citation type="journal article" date="2008" name="J. Lipid Res.">
        <title>2-Hydroxy-ceramide synthesis by ceramide synthase family: enzymatic basis for the preference of FA chain length.</title>
        <authorList>
            <person name="Mizutani Y."/>
            <person name="Kihara A."/>
            <person name="Chiba H."/>
            <person name="Tojo H."/>
            <person name="Igarashi Y."/>
        </authorList>
    </citation>
    <scope>FUNCTION</scope>
    <scope>CATALYTIC ACTIVITY</scope>
    <scope>PATHWAY</scope>
</reference>
<reference key="4">
    <citation type="journal article" date="2010" name="Cell">
        <title>A tissue-specific atlas of mouse protein phosphorylation and expression.</title>
        <authorList>
            <person name="Huttlin E.L."/>
            <person name="Jedrychowski M.P."/>
            <person name="Elias J.E."/>
            <person name="Goswami T."/>
            <person name="Rad R."/>
            <person name="Beausoleil S.A."/>
            <person name="Villen J."/>
            <person name="Haas W."/>
            <person name="Sowa M.E."/>
            <person name="Gygi S.P."/>
        </authorList>
    </citation>
    <scope>PHOSPHORYLATION [LARGE SCALE ANALYSIS] AT SER-340</scope>
    <scope>IDENTIFICATION BY MASS SPECTROMETRY [LARGE SCALE ANALYSIS]</scope>
    <source>
        <tissue>Kidney</tissue>
        <tissue>Testis</tissue>
    </source>
</reference>
<reference key="5">
    <citation type="journal article" date="2012" name="Hum. Mol. Genet.">
        <title>Loss of ceramide synthase 3 causes lethal skin barrier disruption.</title>
        <authorList>
            <person name="Jennemann R."/>
            <person name="Rabionet M."/>
            <person name="Gorgas K."/>
            <person name="Epstein S."/>
            <person name="Dalpke A."/>
            <person name="Rothermel U."/>
            <person name="Bayerle A."/>
            <person name="van der Hoeven F."/>
            <person name="Imgrund S."/>
            <person name="Kirsch J."/>
            <person name="Nickel W."/>
            <person name="Willecke K."/>
            <person name="Riezman H."/>
            <person name="Groene H.J."/>
            <person name="Sandhoff R."/>
        </authorList>
    </citation>
    <scope>FUNCTION</scope>
    <scope>CATALYTIC ACTIVITY</scope>
    <scope>PATHWAY</scope>
    <scope>SUBCELLULAR LOCATION</scope>
    <scope>DISRUPTION PHENOTYPE</scope>
    <scope>TISSUE SPECIFICITY</scope>
</reference>